<reference key="1">
    <citation type="journal article" date="2005" name="Nature">
        <title>The genome of the social amoeba Dictyostelium discoideum.</title>
        <authorList>
            <person name="Eichinger L."/>
            <person name="Pachebat J.A."/>
            <person name="Gloeckner G."/>
            <person name="Rajandream M.A."/>
            <person name="Sucgang R."/>
            <person name="Berriman M."/>
            <person name="Song J."/>
            <person name="Olsen R."/>
            <person name="Szafranski K."/>
            <person name="Xu Q."/>
            <person name="Tunggal B."/>
            <person name="Kummerfeld S."/>
            <person name="Madera M."/>
            <person name="Konfortov B.A."/>
            <person name="Rivero F."/>
            <person name="Bankier A.T."/>
            <person name="Lehmann R."/>
            <person name="Hamlin N."/>
            <person name="Davies R."/>
            <person name="Gaudet P."/>
            <person name="Fey P."/>
            <person name="Pilcher K."/>
            <person name="Chen G."/>
            <person name="Saunders D."/>
            <person name="Sodergren E.J."/>
            <person name="Davis P."/>
            <person name="Kerhornou A."/>
            <person name="Nie X."/>
            <person name="Hall N."/>
            <person name="Anjard C."/>
            <person name="Hemphill L."/>
            <person name="Bason N."/>
            <person name="Farbrother P."/>
            <person name="Desany B."/>
            <person name="Just E."/>
            <person name="Morio T."/>
            <person name="Rost R."/>
            <person name="Churcher C.M."/>
            <person name="Cooper J."/>
            <person name="Haydock S."/>
            <person name="van Driessche N."/>
            <person name="Cronin A."/>
            <person name="Goodhead I."/>
            <person name="Muzny D.M."/>
            <person name="Mourier T."/>
            <person name="Pain A."/>
            <person name="Lu M."/>
            <person name="Harper D."/>
            <person name="Lindsay R."/>
            <person name="Hauser H."/>
            <person name="James K.D."/>
            <person name="Quiles M."/>
            <person name="Madan Babu M."/>
            <person name="Saito T."/>
            <person name="Buchrieser C."/>
            <person name="Wardroper A."/>
            <person name="Felder M."/>
            <person name="Thangavelu M."/>
            <person name="Johnson D."/>
            <person name="Knights A."/>
            <person name="Loulseged H."/>
            <person name="Mungall K.L."/>
            <person name="Oliver K."/>
            <person name="Price C."/>
            <person name="Quail M.A."/>
            <person name="Urushihara H."/>
            <person name="Hernandez J."/>
            <person name="Rabbinowitsch E."/>
            <person name="Steffen D."/>
            <person name="Sanders M."/>
            <person name="Ma J."/>
            <person name="Kohara Y."/>
            <person name="Sharp S."/>
            <person name="Simmonds M.N."/>
            <person name="Spiegler S."/>
            <person name="Tivey A."/>
            <person name="Sugano S."/>
            <person name="White B."/>
            <person name="Walker D."/>
            <person name="Woodward J.R."/>
            <person name="Winckler T."/>
            <person name="Tanaka Y."/>
            <person name="Shaulsky G."/>
            <person name="Schleicher M."/>
            <person name="Weinstock G.M."/>
            <person name="Rosenthal A."/>
            <person name="Cox E.C."/>
            <person name="Chisholm R.L."/>
            <person name="Gibbs R.A."/>
            <person name="Loomis W.F."/>
            <person name="Platzer M."/>
            <person name="Kay R.R."/>
            <person name="Williams J.G."/>
            <person name="Dear P.H."/>
            <person name="Noegel A.A."/>
            <person name="Barrell B.G."/>
            <person name="Kuspa A."/>
        </authorList>
    </citation>
    <scope>NUCLEOTIDE SEQUENCE [LARGE SCALE GENOMIC DNA]</scope>
    <source>
        <strain>AX4</strain>
    </source>
</reference>
<reference key="2">
    <citation type="submission" date="2008-10" db="UniProtKB">
        <authorList>
            <person name="Bienvenut W.V."/>
            <person name="Sumpton D."/>
            <person name="Ura S."/>
            <person name="Insall R.H."/>
        </authorList>
    </citation>
    <scope>PROTEIN SEQUENCE OF 1-45; 51-208 AND 210-231</scope>
    <scope>IDENTIFICATION BY MASS SPECTROMETRY</scope>
    <source>
        <strain>AX2</strain>
    </source>
</reference>
<keyword id="KW-0009">Actin-binding</keyword>
<keyword id="KW-0903">Direct protein sequencing</keyword>
<keyword id="KW-1185">Reference proteome</keyword>
<sequence>MTTQIYQVPVVSNGLRETESILQIVDSLEKLEKVFNDMYSTISARVSHEKSRIDNVANRLNNAQHKVNQIVGSKQAITVFSSAKYPADKKWGDYVPIYSGKHKLPFKPSHYHGLNSEDSPIKKRPEDSYLDVNDLVFIEKSIDTTSKEVEVKEGLGRIPAQIPSVSNLLLFNTQENPYKKYSNTLDNLSGGDGGEDDYTIFGDQLSKKKRLGDAPVTVKDGDSRIDAENVKIGYEPGTFEIPVYNFPSILPLPNVAENITWAAESQSIAPSQKATLNLLPTYDNSNSGSAPVNQSSGGDNNVNNNNNNNNSNNSTGIMQPPQPTNAPPPPPPPPQSANAPPPPPPPPVSAPPPFNPPSVNSNNDDDDDDDDDNGGGGGPGGAIGDLLADIRRGHKNRLKKADVGGDNGDGEDNKPPPVSDGGGGLMGDLFKKLALRRQSIATTKSTKKQSKSKKEDTDDQDGESDTDSSEWE</sequence>
<name>WASH1_DICDI</name>
<organism>
    <name type="scientific">Dictyostelium discoideum</name>
    <name type="common">Social amoeba</name>
    <dbReference type="NCBI Taxonomy" id="44689"/>
    <lineage>
        <taxon>Eukaryota</taxon>
        <taxon>Amoebozoa</taxon>
        <taxon>Evosea</taxon>
        <taxon>Eumycetozoa</taxon>
        <taxon>Dictyostelia</taxon>
        <taxon>Dictyosteliales</taxon>
        <taxon>Dictyosteliaceae</taxon>
        <taxon>Dictyostelium</taxon>
    </lineage>
</organism>
<evidence type="ECO:0000250" key="1"/>
<evidence type="ECO:0000255" key="2">
    <source>
        <dbReference type="PROSITE-ProRule" id="PRU00406"/>
    </source>
</evidence>
<evidence type="ECO:0000256" key="3">
    <source>
        <dbReference type="SAM" id="MobiDB-lite"/>
    </source>
</evidence>
<evidence type="ECO:0000305" key="4"/>
<comment type="function">
    <text evidence="1">Acts as a nucleation-promoting factor by activating the Arp2/3 complex to induce actin polymerization.</text>
</comment>
<comment type="similarity">
    <text evidence="4">Belongs to the WASH1 family.</text>
</comment>
<gene>
    <name type="ORF">DDB_G0292878</name>
</gene>
<accession>Q54CK9</accession>
<protein>
    <recommendedName>
        <fullName>WAS protein family homolog DDB_G0292878</fullName>
    </recommendedName>
</protein>
<proteinExistence type="evidence at protein level"/>
<feature type="chain" id="PRO_0000388366" description="WAS protein family homolog DDB_G0292878">
    <location>
        <begin position="1"/>
        <end position="472"/>
    </location>
</feature>
<feature type="domain" description="WH2" evidence="2">
    <location>
        <begin position="382"/>
        <end position="401"/>
    </location>
</feature>
<feature type="region of interest" description="Disordered" evidence="3">
    <location>
        <begin position="279"/>
        <end position="472"/>
    </location>
</feature>
<feature type="compositionally biased region" description="Polar residues" evidence="3">
    <location>
        <begin position="282"/>
        <end position="299"/>
    </location>
</feature>
<feature type="compositionally biased region" description="Low complexity" evidence="3">
    <location>
        <begin position="300"/>
        <end position="314"/>
    </location>
</feature>
<feature type="compositionally biased region" description="Pro residues" evidence="3">
    <location>
        <begin position="320"/>
        <end position="356"/>
    </location>
</feature>
<feature type="compositionally biased region" description="Acidic residues" evidence="3">
    <location>
        <begin position="363"/>
        <end position="373"/>
    </location>
</feature>
<feature type="compositionally biased region" description="Gly residues" evidence="3">
    <location>
        <begin position="374"/>
        <end position="383"/>
    </location>
</feature>
<feature type="compositionally biased region" description="Acidic residues" evidence="3">
    <location>
        <begin position="457"/>
        <end position="472"/>
    </location>
</feature>
<dbReference type="EMBL" id="AAFI02000197">
    <property type="protein sequence ID" value="EAL60988.1"/>
    <property type="molecule type" value="Genomic_DNA"/>
</dbReference>
<dbReference type="RefSeq" id="XP_629407.1">
    <property type="nucleotide sequence ID" value="XM_629405.1"/>
</dbReference>
<dbReference type="SMR" id="Q54CK9"/>
<dbReference type="FunCoup" id="Q54CK9">
    <property type="interactions" value="95"/>
</dbReference>
<dbReference type="STRING" id="44689.Q54CK9"/>
<dbReference type="PaxDb" id="44689-DDB0191666"/>
<dbReference type="EnsemblProtists" id="EAL60988">
    <property type="protein sequence ID" value="EAL60988"/>
    <property type="gene ID" value="DDB_G0292878"/>
</dbReference>
<dbReference type="GeneID" id="8628926"/>
<dbReference type="KEGG" id="ddi:DDB_G0292878"/>
<dbReference type="dictyBase" id="DDB_G0292878">
    <property type="gene designation" value="wshA"/>
</dbReference>
<dbReference type="VEuPathDB" id="AmoebaDB:DDB_G0292878"/>
<dbReference type="eggNOG" id="ENOG502QSX3">
    <property type="taxonomic scope" value="Eukaryota"/>
</dbReference>
<dbReference type="HOGENOM" id="CLU_029156_1_0_1"/>
<dbReference type="InParanoid" id="Q54CK9"/>
<dbReference type="OMA" id="SMDSPYE"/>
<dbReference type="PhylomeDB" id="Q54CK9"/>
<dbReference type="Reactome" id="R-DDI-2029482">
    <property type="pathway name" value="Regulation of actin dynamics for phagocytic cup formation"/>
</dbReference>
<dbReference type="Reactome" id="R-DDI-5663213">
    <property type="pathway name" value="RHO GTPases Activate WASPs and WAVEs"/>
</dbReference>
<dbReference type="PRO" id="PR:Q54CK9"/>
<dbReference type="Proteomes" id="UP000002195">
    <property type="component" value="Chromosome 6"/>
</dbReference>
<dbReference type="GO" id="GO:0005829">
    <property type="term" value="C:cytosol"/>
    <property type="evidence" value="ECO:0007669"/>
    <property type="project" value="GOC"/>
</dbReference>
<dbReference type="GO" id="GO:0005769">
    <property type="term" value="C:early endosome"/>
    <property type="evidence" value="ECO:0000318"/>
    <property type="project" value="GO_Central"/>
</dbReference>
<dbReference type="GO" id="GO:0032009">
    <property type="term" value="C:early phagosome"/>
    <property type="evidence" value="ECO:0000314"/>
    <property type="project" value="dictyBase"/>
</dbReference>
<dbReference type="GO" id="GO:0140220">
    <property type="term" value="C:pathogen-containing vacuole"/>
    <property type="evidence" value="ECO:0000314"/>
    <property type="project" value="dictyBase"/>
</dbReference>
<dbReference type="GO" id="GO:0032010">
    <property type="term" value="C:phagolysosome"/>
    <property type="evidence" value="ECO:0000314"/>
    <property type="project" value="dictyBase"/>
</dbReference>
<dbReference type="GO" id="GO:0055037">
    <property type="term" value="C:recycling endosome"/>
    <property type="evidence" value="ECO:0000318"/>
    <property type="project" value="GO_Central"/>
</dbReference>
<dbReference type="GO" id="GO:0071203">
    <property type="term" value="C:WASH complex"/>
    <property type="evidence" value="ECO:0000314"/>
    <property type="project" value="dictyBase"/>
</dbReference>
<dbReference type="GO" id="GO:0003779">
    <property type="term" value="F:actin binding"/>
    <property type="evidence" value="ECO:0000305"/>
    <property type="project" value="dictyBase"/>
</dbReference>
<dbReference type="GO" id="GO:0043014">
    <property type="term" value="F:alpha-tubulin binding"/>
    <property type="evidence" value="ECO:0000318"/>
    <property type="project" value="GO_Central"/>
</dbReference>
<dbReference type="GO" id="GO:0043015">
    <property type="term" value="F:gamma-tubulin binding"/>
    <property type="evidence" value="ECO:0000318"/>
    <property type="project" value="GO_Central"/>
</dbReference>
<dbReference type="GO" id="GO:0030041">
    <property type="term" value="P:actin filament polymerization"/>
    <property type="evidence" value="ECO:0000315"/>
    <property type="project" value="dictyBase"/>
</dbReference>
<dbReference type="GO" id="GO:0045010">
    <property type="term" value="P:actin nucleation"/>
    <property type="evidence" value="ECO:0000315"/>
    <property type="project" value="dictyBase"/>
</dbReference>
<dbReference type="GO" id="GO:0034314">
    <property type="term" value="P:Arp2/3 complex-mediated actin nucleation"/>
    <property type="evidence" value="ECO:0000318"/>
    <property type="project" value="GO_Central"/>
</dbReference>
<dbReference type="GO" id="GO:0050829">
    <property type="term" value="P:defense response to Gram-negative bacterium"/>
    <property type="evidence" value="ECO:0000315"/>
    <property type="project" value="dictyBase"/>
</dbReference>
<dbReference type="GO" id="GO:0032456">
    <property type="term" value="P:endocytic recycling"/>
    <property type="evidence" value="ECO:0000315"/>
    <property type="project" value="dictyBase"/>
</dbReference>
<dbReference type="GO" id="GO:0006887">
    <property type="term" value="P:exocytosis"/>
    <property type="evidence" value="ECO:0000315"/>
    <property type="project" value="dictyBase"/>
</dbReference>
<dbReference type="GO" id="GO:0007041">
    <property type="term" value="P:lysosomal transport"/>
    <property type="evidence" value="ECO:0000315"/>
    <property type="project" value="dictyBase"/>
</dbReference>
<dbReference type="GO" id="GO:0044655">
    <property type="term" value="P:phagosome reneutralization"/>
    <property type="evidence" value="ECO:0000315"/>
    <property type="project" value="dictyBase"/>
</dbReference>
<dbReference type="GO" id="GO:2001137">
    <property type="term" value="P:positive regulation of endocytic recycling"/>
    <property type="evidence" value="ECO:0000315"/>
    <property type="project" value="dictyBase"/>
</dbReference>
<dbReference type="GO" id="GO:0071692">
    <property type="term" value="P:protein localization to extracellular region"/>
    <property type="evidence" value="ECO:0000315"/>
    <property type="project" value="dictyBase"/>
</dbReference>
<dbReference type="GO" id="GO:0009306">
    <property type="term" value="P:protein secretion"/>
    <property type="evidence" value="ECO:0000314"/>
    <property type="project" value="dictyBase"/>
</dbReference>
<dbReference type="GO" id="GO:0042147">
    <property type="term" value="P:retrograde transport, endosome to Golgi"/>
    <property type="evidence" value="ECO:0000318"/>
    <property type="project" value="GO_Central"/>
</dbReference>
<dbReference type="GO" id="GO:0033299">
    <property type="term" value="P:secretion of lysosomal enzymes"/>
    <property type="evidence" value="ECO:0000315"/>
    <property type="project" value="dictyBase"/>
</dbReference>
<dbReference type="InterPro" id="IPR028290">
    <property type="entry name" value="WASH1"/>
</dbReference>
<dbReference type="InterPro" id="IPR021854">
    <property type="entry name" value="WASH1_WAHD"/>
</dbReference>
<dbReference type="InterPro" id="IPR003124">
    <property type="entry name" value="WH2_dom"/>
</dbReference>
<dbReference type="PANTHER" id="PTHR23331">
    <property type="entry name" value="CXYORF1"/>
    <property type="match status" value="1"/>
</dbReference>
<dbReference type="PANTHER" id="PTHR23331:SF1">
    <property type="entry name" value="WASH COMPLEX SUBUNIT 1"/>
    <property type="match status" value="1"/>
</dbReference>
<dbReference type="Pfam" id="PF11945">
    <property type="entry name" value="WASH_WAHD"/>
    <property type="match status" value="1"/>
</dbReference>
<dbReference type="PROSITE" id="PS51082">
    <property type="entry name" value="WH2"/>
    <property type="match status" value="1"/>
</dbReference>